<organism>
    <name type="scientific">Streptomyces anulatus</name>
    <name type="common">Streptomyces chrysomallus</name>
    <dbReference type="NCBI Taxonomy" id="1892"/>
    <lineage>
        <taxon>Bacteria</taxon>
        <taxon>Bacillati</taxon>
        <taxon>Actinomycetota</taxon>
        <taxon>Actinomycetes</taxon>
        <taxon>Kitasatosporales</taxon>
        <taxon>Streptomycetaceae</taxon>
        <taxon>Streptomyces</taxon>
    </lineage>
</organism>
<protein>
    <recommendedName>
        <fullName evidence="3">Ectoine dioxygenase</fullName>
        <ecNumber evidence="3">1.14.11.55</ecNumber>
    </recommendedName>
    <alternativeName>
        <fullName evidence="3">Ectoine hydroxylase</fullName>
    </alternativeName>
</protein>
<accession>Q6QUY7</accession>
<proteinExistence type="inferred from homology"/>
<gene>
    <name evidence="3" type="primary">ectD</name>
    <name type="synonym">thpD</name>
</gene>
<sequence>MTTEVRADLYPSRGAAEMTTPRQDPVIWSAPGAPGPVAAKDLQGYEHDGFLTVDQLIAPDEVAVYQAELNRLISDPAVRADERSIVEKQSQNVRSVFEVHRISEVFAGLVRDERVVGRARQILGSDVYVHQSRINVKPGFGATGFYWHSDFETWHAEDGLPNMRTVSVSIALTENFDTNGGLMIMPGSHKTFLGCAGETPKDNYKKSLQMQDAGTPSDEALTKMADRHGIRLFTGRAGSATWFDCNAMHGSGDNITPYARSNVFIVFNSVENAAQEPFAAPIRRPEFIGARDFTPVK</sequence>
<evidence type="ECO:0000250" key="1">
    <source>
        <dbReference type="UniProtKB" id="Q1GNW5"/>
    </source>
</evidence>
<evidence type="ECO:0000250" key="2">
    <source>
        <dbReference type="UniProtKB" id="Q2TDY4"/>
    </source>
</evidence>
<evidence type="ECO:0000250" key="3">
    <source>
        <dbReference type="UniProtKB" id="Q93RV9"/>
    </source>
</evidence>
<evidence type="ECO:0000269" key="4">
    <source>
    </source>
</evidence>
<evidence type="ECO:0000305" key="5"/>
<comment type="function">
    <text evidence="4">Involved in the biosynthesis of 5-hydroxyectoine, called compatible solute, which helps organisms to survive extreme osmotic stress by acting as a highly soluble organic osmolyte. Catalyzes the 2-oxoglutarate-dependent selective hydroxylation of L-ectoine to yield (4S,5S)-5-hydroxyectoine.</text>
</comment>
<comment type="catalytic activity">
    <reaction evidence="3">
        <text>L-ectoine + 2-oxoglutarate + O2 = 5-hydroxyectoine + succinate + CO2</text>
        <dbReference type="Rhea" id="RHEA:45740"/>
        <dbReference type="ChEBI" id="CHEBI:15379"/>
        <dbReference type="ChEBI" id="CHEBI:16526"/>
        <dbReference type="ChEBI" id="CHEBI:16810"/>
        <dbReference type="ChEBI" id="CHEBI:30031"/>
        <dbReference type="ChEBI" id="CHEBI:58515"/>
        <dbReference type="ChEBI" id="CHEBI:85413"/>
        <dbReference type="EC" id="1.14.11.55"/>
    </reaction>
</comment>
<comment type="cofactor">
    <cofactor evidence="2">
        <name>Fe(2+)</name>
        <dbReference type="ChEBI" id="CHEBI:29033"/>
    </cofactor>
    <text evidence="2">Binds 1 Fe(2+) ion.</text>
</comment>
<comment type="subunit">
    <text evidence="2">Homodimer.</text>
</comment>
<comment type="similarity">
    <text evidence="5">Belongs to the PhyH family. EctD subfamily.</text>
</comment>
<feature type="chain" id="PRO_0000215242" description="Ectoine dioxygenase">
    <location>
        <begin position="1"/>
        <end position="297"/>
    </location>
</feature>
<feature type="binding site" evidence="1">
    <location>
        <position position="131"/>
    </location>
    <ligand>
        <name>L-ectoine</name>
        <dbReference type="ChEBI" id="CHEBI:58515"/>
    </ligand>
</feature>
<feature type="binding site" evidence="1">
    <location>
        <position position="137"/>
    </location>
    <ligand>
        <name>2-oxoglutarate</name>
        <dbReference type="ChEBI" id="CHEBI:16810"/>
    </ligand>
</feature>
<feature type="binding site" evidence="2">
    <location>
        <position position="148"/>
    </location>
    <ligand>
        <name>Fe cation</name>
        <dbReference type="ChEBI" id="CHEBI:24875"/>
    </ligand>
</feature>
<feature type="binding site" evidence="2">
    <location>
        <position position="150"/>
    </location>
    <ligand>
        <name>Fe cation</name>
        <dbReference type="ChEBI" id="CHEBI:24875"/>
    </ligand>
</feature>
<feature type="binding site" evidence="2">
    <location>
        <position position="249"/>
    </location>
    <ligand>
        <name>Fe cation</name>
        <dbReference type="ChEBI" id="CHEBI:24875"/>
    </ligand>
</feature>
<feature type="site" description="Important for ectoine stabilization" evidence="1">
    <location>
        <position position="154"/>
    </location>
</feature>
<keyword id="KW-0223">Dioxygenase</keyword>
<keyword id="KW-0408">Iron</keyword>
<keyword id="KW-0479">Metal-binding</keyword>
<keyword id="KW-0560">Oxidoreductase</keyword>
<name>ECTD_STRAQ</name>
<reference key="1">
    <citation type="journal article" date="2004" name="Appl. Environ. Microbiol.">
        <title>Functional expression of the ectoine hydroxylase gene (thpD) from Streptomyces chrysomallus in Halomonas elongata.</title>
        <authorList>
            <person name="Prabhu J."/>
            <person name="Schauwecker F."/>
            <person name="Grammel N."/>
            <person name="Keller U."/>
            <person name="Bernhard M."/>
        </authorList>
    </citation>
    <scope>NUCLEOTIDE SEQUENCE [GENOMIC DNA]</scope>
    <scope>FUNCTION</scope>
    <source>
        <strain>ATCC 11523 / DSM 40128 / JCM 4296 / LMG 20459 / NBRC 15393</strain>
    </source>
</reference>
<dbReference type="EC" id="1.14.11.55" evidence="3"/>
<dbReference type="EMBL" id="AY524544">
    <property type="protein sequence ID" value="AAS02097.1"/>
    <property type="molecule type" value="Genomic_DNA"/>
</dbReference>
<dbReference type="RefSeq" id="WP_056706218.1">
    <property type="nucleotide sequence ID" value="NZ_JBIALE010000002.1"/>
</dbReference>
<dbReference type="SMR" id="Q6QUY7"/>
<dbReference type="GeneID" id="65909294"/>
<dbReference type="BRENDA" id="1.14.11.55">
    <property type="organism ID" value="5994"/>
</dbReference>
<dbReference type="GO" id="GO:0016706">
    <property type="term" value="F:2-oxoglutarate-dependent dioxygenase activity"/>
    <property type="evidence" value="ECO:0000250"/>
    <property type="project" value="UniProtKB"/>
</dbReference>
<dbReference type="GO" id="GO:0005506">
    <property type="term" value="F:iron ion binding"/>
    <property type="evidence" value="ECO:0000250"/>
    <property type="project" value="UniProtKB"/>
</dbReference>
<dbReference type="GO" id="GO:0042400">
    <property type="term" value="P:ectoine catabolic process"/>
    <property type="evidence" value="ECO:0000250"/>
    <property type="project" value="UniProtKB"/>
</dbReference>
<dbReference type="FunFam" id="2.60.120.620:FF:000016">
    <property type="entry name" value="Ectoine hydroxylase"/>
    <property type="match status" value="1"/>
</dbReference>
<dbReference type="Gene3D" id="2.60.120.620">
    <property type="entry name" value="q2cbj1_9rhob like domain"/>
    <property type="match status" value="1"/>
</dbReference>
<dbReference type="InterPro" id="IPR012774">
    <property type="entry name" value="EctD"/>
</dbReference>
<dbReference type="InterPro" id="IPR008775">
    <property type="entry name" value="Phytyl_CoA_dOase-like"/>
</dbReference>
<dbReference type="NCBIfam" id="TIGR02408">
    <property type="entry name" value="ectoine_ThpD"/>
    <property type="match status" value="1"/>
</dbReference>
<dbReference type="PANTHER" id="PTHR20883:SF48">
    <property type="entry name" value="ECTOINE DIOXYGENASE"/>
    <property type="match status" value="1"/>
</dbReference>
<dbReference type="PANTHER" id="PTHR20883">
    <property type="entry name" value="PHYTANOYL-COA DIOXYGENASE DOMAIN CONTAINING 1"/>
    <property type="match status" value="1"/>
</dbReference>
<dbReference type="Pfam" id="PF05721">
    <property type="entry name" value="PhyH"/>
    <property type="match status" value="1"/>
</dbReference>
<dbReference type="SUPFAM" id="SSF51197">
    <property type="entry name" value="Clavaminate synthase-like"/>
    <property type="match status" value="1"/>
</dbReference>